<dbReference type="EC" id="3.5.99.6" evidence="1"/>
<dbReference type="EMBL" id="CP000687">
    <property type="protein sequence ID" value="ABY70340.1"/>
    <property type="molecule type" value="Genomic_DNA"/>
</dbReference>
<dbReference type="RefSeq" id="WP_005602606.1">
    <property type="nucleotide sequence ID" value="NC_010278.1"/>
</dbReference>
<dbReference type="SMR" id="B0BSS6"/>
<dbReference type="KEGG" id="apj:APJL_1790"/>
<dbReference type="HOGENOM" id="CLU_049611_0_1_6"/>
<dbReference type="UniPathway" id="UPA00629">
    <property type="reaction ID" value="UER00684"/>
</dbReference>
<dbReference type="Proteomes" id="UP000008547">
    <property type="component" value="Chromosome"/>
</dbReference>
<dbReference type="GO" id="GO:0005737">
    <property type="term" value="C:cytoplasm"/>
    <property type="evidence" value="ECO:0007669"/>
    <property type="project" value="TreeGrafter"/>
</dbReference>
<dbReference type="GO" id="GO:0004342">
    <property type="term" value="F:glucosamine-6-phosphate deaminase activity"/>
    <property type="evidence" value="ECO:0007669"/>
    <property type="project" value="UniProtKB-UniRule"/>
</dbReference>
<dbReference type="GO" id="GO:0042802">
    <property type="term" value="F:identical protein binding"/>
    <property type="evidence" value="ECO:0007669"/>
    <property type="project" value="TreeGrafter"/>
</dbReference>
<dbReference type="GO" id="GO:0005975">
    <property type="term" value="P:carbohydrate metabolic process"/>
    <property type="evidence" value="ECO:0007669"/>
    <property type="project" value="InterPro"/>
</dbReference>
<dbReference type="GO" id="GO:0006043">
    <property type="term" value="P:glucosamine catabolic process"/>
    <property type="evidence" value="ECO:0007669"/>
    <property type="project" value="TreeGrafter"/>
</dbReference>
<dbReference type="GO" id="GO:0006046">
    <property type="term" value="P:N-acetylglucosamine catabolic process"/>
    <property type="evidence" value="ECO:0007669"/>
    <property type="project" value="TreeGrafter"/>
</dbReference>
<dbReference type="GO" id="GO:0019262">
    <property type="term" value="P:N-acetylneuraminate catabolic process"/>
    <property type="evidence" value="ECO:0007669"/>
    <property type="project" value="UniProtKB-UniRule"/>
</dbReference>
<dbReference type="CDD" id="cd01399">
    <property type="entry name" value="GlcN6P_deaminase"/>
    <property type="match status" value="1"/>
</dbReference>
<dbReference type="FunFam" id="3.40.50.1360:FF:000002">
    <property type="entry name" value="Glucosamine-6-phosphate deaminase"/>
    <property type="match status" value="1"/>
</dbReference>
<dbReference type="Gene3D" id="3.40.50.1360">
    <property type="match status" value="1"/>
</dbReference>
<dbReference type="HAMAP" id="MF_01241">
    <property type="entry name" value="GlcN6P_deamin"/>
    <property type="match status" value="1"/>
</dbReference>
<dbReference type="InterPro" id="IPR006148">
    <property type="entry name" value="Glc/Gal-6P_isomerase"/>
</dbReference>
<dbReference type="InterPro" id="IPR004547">
    <property type="entry name" value="Glucosamine6P_isomerase"/>
</dbReference>
<dbReference type="InterPro" id="IPR018321">
    <property type="entry name" value="Glucosamine6P_isomerase_CS"/>
</dbReference>
<dbReference type="InterPro" id="IPR037171">
    <property type="entry name" value="NagB/RpiA_transferase-like"/>
</dbReference>
<dbReference type="NCBIfam" id="TIGR00502">
    <property type="entry name" value="nagB"/>
    <property type="match status" value="1"/>
</dbReference>
<dbReference type="PANTHER" id="PTHR11280">
    <property type="entry name" value="GLUCOSAMINE-6-PHOSPHATE ISOMERASE"/>
    <property type="match status" value="1"/>
</dbReference>
<dbReference type="PANTHER" id="PTHR11280:SF5">
    <property type="entry name" value="GLUCOSAMINE-6-PHOSPHATE ISOMERASE"/>
    <property type="match status" value="1"/>
</dbReference>
<dbReference type="Pfam" id="PF01182">
    <property type="entry name" value="Glucosamine_iso"/>
    <property type="match status" value="1"/>
</dbReference>
<dbReference type="SUPFAM" id="SSF100950">
    <property type="entry name" value="NagB/RpiA/CoA transferase-like"/>
    <property type="match status" value="1"/>
</dbReference>
<dbReference type="PROSITE" id="PS01161">
    <property type="entry name" value="GLC_GALNAC_ISOMERASE"/>
    <property type="match status" value="1"/>
</dbReference>
<keyword id="KW-0021">Allosteric enzyme</keyword>
<keyword id="KW-0119">Carbohydrate metabolism</keyword>
<keyword id="KW-0378">Hydrolase</keyword>
<sequence length="267" mass="30270">MRLIPLQTSEQVSRWAARHIAERINRFQPTADRPFVLGLPTGGTPLQTYKELIRLYQAGEVSFQHVVTFNMDEYVGLPKEHPQSYHTFMYRNFFDHIDIQPQNINILNGNTEDHDAECRRYEEKIKSYGKIHLFMGGVGVDGHIAFNEPASSLGSRTRIKTLTEDTLIANSRFFDNDITKVPKYALTVGVATLLDAEEVMLLITGYNKALALQACVEGSVNHMWTVSALQLHKRGIVVCDEPATQELKVKTVKYFTQLETQAIQSVL</sequence>
<evidence type="ECO:0000255" key="1">
    <source>
        <dbReference type="HAMAP-Rule" id="MF_01241"/>
    </source>
</evidence>
<comment type="function">
    <text evidence="1">Catalyzes the reversible isomerization-deamination of glucosamine 6-phosphate (GlcN6P) to form fructose 6-phosphate (Fru6P) and ammonium ion.</text>
</comment>
<comment type="catalytic activity">
    <reaction evidence="1">
        <text>alpha-D-glucosamine 6-phosphate + H2O = beta-D-fructose 6-phosphate + NH4(+)</text>
        <dbReference type="Rhea" id="RHEA:12172"/>
        <dbReference type="ChEBI" id="CHEBI:15377"/>
        <dbReference type="ChEBI" id="CHEBI:28938"/>
        <dbReference type="ChEBI" id="CHEBI:57634"/>
        <dbReference type="ChEBI" id="CHEBI:75989"/>
        <dbReference type="EC" id="3.5.99.6"/>
    </reaction>
</comment>
<comment type="activity regulation">
    <text evidence="1">Allosterically activated by N-acetylglucosamine 6-phosphate (GlcNAc6P).</text>
</comment>
<comment type="pathway">
    <text evidence="1">Amino-sugar metabolism; N-acetylneuraminate degradation; D-fructose 6-phosphate from N-acetylneuraminate: step 5/5.</text>
</comment>
<comment type="subunit">
    <text evidence="1">Homohexamer.</text>
</comment>
<comment type="similarity">
    <text evidence="1">Belongs to the glucosamine/galactosamine-6-phosphate isomerase family. NagB subfamily.</text>
</comment>
<feature type="chain" id="PRO_1000139752" description="Glucosamine-6-phosphate deaminase">
    <location>
        <begin position="1"/>
        <end position="267"/>
    </location>
</feature>
<feature type="active site" description="Proton acceptor; for enolization step" evidence="1">
    <location>
        <position position="72"/>
    </location>
</feature>
<feature type="active site" description="For ring-opening step" evidence="1">
    <location>
        <position position="141"/>
    </location>
</feature>
<feature type="active site" description="Proton acceptor; for ring-opening step" evidence="1">
    <location>
        <position position="143"/>
    </location>
</feature>
<feature type="active site" description="For ring-opening step" evidence="1">
    <location>
        <position position="148"/>
    </location>
</feature>
<feature type="site" description="Part of the allosteric site" evidence="1">
    <location>
        <position position="151"/>
    </location>
</feature>
<feature type="site" description="Part of the allosteric site" evidence="1">
    <location>
        <position position="158"/>
    </location>
</feature>
<feature type="site" description="Part of the allosteric site" evidence="1">
    <location>
        <position position="160"/>
    </location>
</feature>
<feature type="site" description="Part of the allosteric site" evidence="1">
    <location>
        <position position="161"/>
    </location>
</feature>
<feature type="site" description="Part of the allosteric site" evidence="1">
    <location>
        <position position="254"/>
    </location>
</feature>
<reference key="1">
    <citation type="journal article" date="2008" name="PLoS ONE">
        <title>Genome biology of Actinobacillus pleuropneumoniae JL03, an isolate of serotype 3 prevalent in China.</title>
        <authorList>
            <person name="Xu Z."/>
            <person name="Zhou Y."/>
            <person name="Li L."/>
            <person name="Zhou R."/>
            <person name="Xiao S."/>
            <person name="Wan Y."/>
            <person name="Zhang S."/>
            <person name="Wang K."/>
            <person name="Li W."/>
            <person name="Li L."/>
            <person name="Jin H."/>
            <person name="Kang M."/>
            <person name="Dalai B."/>
            <person name="Li T."/>
            <person name="Liu L."/>
            <person name="Cheng Y."/>
            <person name="Zhang L."/>
            <person name="Xu T."/>
            <person name="Zheng H."/>
            <person name="Pu S."/>
            <person name="Wang B."/>
            <person name="Gu W."/>
            <person name="Zhang X.L."/>
            <person name="Zhu G.-F."/>
            <person name="Wang S."/>
            <person name="Zhao G.-P."/>
            <person name="Chen H."/>
        </authorList>
    </citation>
    <scope>NUCLEOTIDE SEQUENCE [LARGE SCALE GENOMIC DNA]</scope>
    <source>
        <strain>JL03</strain>
    </source>
</reference>
<gene>
    <name evidence="1" type="primary">nagB</name>
    <name type="ordered locus">APJL_1790</name>
</gene>
<proteinExistence type="inferred from homology"/>
<name>NAGB_ACTPJ</name>
<organism>
    <name type="scientific">Actinobacillus pleuropneumoniae serotype 3 (strain JL03)</name>
    <dbReference type="NCBI Taxonomy" id="434271"/>
    <lineage>
        <taxon>Bacteria</taxon>
        <taxon>Pseudomonadati</taxon>
        <taxon>Pseudomonadota</taxon>
        <taxon>Gammaproteobacteria</taxon>
        <taxon>Pasteurellales</taxon>
        <taxon>Pasteurellaceae</taxon>
        <taxon>Actinobacillus</taxon>
    </lineage>
</organism>
<accession>B0BSS6</accession>
<protein>
    <recommendedName>
        <fullName evidence="1">Glucosamine-6-phosphate deaminase</fullName>
        <ecNumber evidence="1">3.5.99.6</ecNumber>
    </recommendedName>
    <alternativeName>
        <fullName evidence="1">GlcN6P deaminase</fullName>
        <shortName evidence="1">GNPDA</shortName>
    </alternativeName>
    <alternativeName>
        <fullName evidence="1">Glucosamine-6-phosphate isomerase</fullName>
    </alternativeName>
</protein>